<proteinExistence type="inferred from homology"/>
<dbReference type="EC" id="3.6.1.23" evidence="1"/>
<dbReference type="EMBL" id="CP000440">
    <property type="protein sequence ID" value="ABI88118.1"/>
    <property type="molecule type" value="Genomic_DNA"/>
</dbReference>
<dbReference type="RefSeq" id="WP_011657718.1">
    <property type="nucleotide sequence ID" value="NZ_CP009798.1"/>
</dbReference>
<dbReference type="SMR" id="Q0BCK5"/>
<dbReference type="GeneID" id="93085232"/>
<dbReference type="KEGG" id="bam:Bamb_2562"/>
<dbReference type="PATRIC" id="fig|339670.21.peg.2344"/>
<dbReference type="eggNOG" id="COG0756">
    <property type="taxonomic scope" value="Bacteria"/>
</dbReference>
<dbReference type="UniPathway" id="UPA00610">
    <property type="reaction ID" value="UER00666"/>
</dbReference>
<dbReference type="Proteomes" id="UP000000662">
    <property type="component" value="Chromosome 1"/>
</dbReference>
<dbReference type="GO" id="GO:0004170">
    <property type="term" value="F:dUTP diphosphatase activity"/>
    <property type="evidence" value="ECO:0007669"/>
    <property type="project" value="UniProtKB-UniRule"/>
</dbReference>
<dbReference type="GO" id="GO:0000287">
    <property type="term" value="F:magnesium ion binding"/>
    <property type="evidence" value="ECO:0007669"/>
    <property type="project" value="UniProtKB-UniRule"/>
</dbReference>
<dbReference type="GO" id="GO:0006226">
    <property type="term" value="P:dUMP biosynthetic process"/>
    <property type="evidence" value="ECO:0007669"/>
    <property type="project" value="UniProtKB-UniRule"/>
</dbReference>
<dbReference type="GO" id="GO:0046081">
    <property type="term" value="P:dUTP catabolic process"/>
    <property type="evidence" value="ECO:0007669"/>
    <property type="project" value="InterPro"/>
</dbReference>
<dbReference type="CDD" id="cd07557">
    <property type="entry name" value="trimeric_dUTPase"/>
    <property type="match status" value="1"/>
</dbReference>
<dbReference type="FunFam" id="2.70.40.10:FF:000002">
    <property type="entry name" value="dUTP diphosphatase"/>
    <property type="match status" value="1"/>
</dbReference>
<dbReference type="Gene3D" id="2.70.40.10">
    <property type="match status" value="1"/>
</dbReference>
<dbReference type="HAMAP" id="MF_00116">
    <property type="entry name" value="dUTPase_bact"/>
    <property type="match status" value="1"/>
</dbReference>
<dbReference type="InterPro" id="IPR008181">
    <property type="entry name" value="dUTPase"/>
</dbReference>
<dbReference type="InterPro" id="IPR029054">
    <property type="entry name" value="dUTPase-like"/>
</dbReference>
<dbReference type="InterPro" id="IPR036157">
    <property type="entry name" value="dUTPase-like_sf"/>
</dbReference>
<dbReference type="InterPro" id="IPR033704">
    <property type="entry name" value="dUTPase_trimeric"/>
</dbReference>
<dbReference type="NCBIfam" id="TIGR00576">
    <property type="entry name" value="dut"/>
    <property type="match status" value="1"/>
</dbReference>
<dbReference type="NCBIfam" id="NF001862">
    <property type="entry name" value="PRK00601.1"/>
    <property type="match status" value="1"/>
</dbReference>
<dbReference type="PANTHER" id="PTHR11241">
    <property type="entry name" value="DEOXYURIDINE 5'-TRIPHOSPHATE NUCLEOTIDOHYDROLASE"/>
    <property type="match status" value="1"/>
</dbReference>
<dbReference type="PANTHER" id="PTHR11241:SF0">
    <property type="entry name" value="DEOXYURIDINE 5'-TRIPHOSPHATE NUCLEOTIDOHYDROLASE"/>
    <property type="match status" value="1"/>
</dbReference>
<dbReference type="Pfam" id="PF00692">
    <property type="entry name" value="dUTPase"/>
    <property type="match status" value="1"/>
</dbReference>
<dbReference type="SUPFAM" id="SSF51283">
    <property type="entry name" value="dUTPase-like"/>
    <property type="match status" value="1"/>
</dbReference>
<name>DUT_BURCM</name>
<protein>
    <recommendedName>
        <fullName evidence="1">Deoxyuridine 5'-triphosphate nucleotidohydrolase</fullName>
        <shortName evidence="1">dUTPase</shortName>
        <ecNumber evidence="1">3.6.1.23</ecNumber>
    </recommendedName>
    <alternativeName>
        <fullName evidence="1">dUTP pyrophosphatase</fullName>
    </alternativeName>
</protein>
<gene>
    <name evidence="1" type="primary">dut</name>
    <name type="ordered locus">Bamb_2562</name>
</gene>
<sequence>MKLDLKILDARMRDYMPAYATTGSAGLDLRACLDAPVTLQPGETTLVPTGLAIHLADPGYAALILPRSGLGHKHGIVLGNLVGLIDSDYQGQLMVSTWNRGQTEFVLNPFERLAQLVIVPVVQAQFNIVDDFAQSDRGEGGFGSTGRH</sequence>
<organism>
    <name type="scientific">Burkholderia ambifaria (strain ATCC BAA-244 / DSM 16087 / CCUG 44356 / LMG 19182 / AMMD)</name>
    <name type="common">Burkholderia cepacia (strain AMMD)</name>
    <dbReference type="NCBI Taxonomy" id="339670"/>
    <lineage>
        <taxon>Bacteria</taxon>
        <taxon>Pseudomonadati</taxon>
        <taxon>Pseudomonadota</taxon>
        <taxon>Betaproteobacteria</taxon>
        <taxon>Burkholderiales</taxon>
        <taxon>Burkholderiaceae</taxon>
        <taxon>Burkholderia</taxon>
        <taxon>Burkholderia cepacia complex</taxon>
    </lineage>
</organism>
<evidence type="ECO:0000255" key="1">
    <source>
        <dbReference type="HAMAP-Rule" id="MF_00116"/>
    </source>
</evidence>
<comment type="function">
    <text evidence="1">This enzyme is involved in nucleotide metabolism: it produces dUMP, the immediate precursor of thymidine nucleotides and it decreases the intracellular concentration of dUTP so that uracil cannot be incorporated into DNA.</text>
</comment>
<comment type="catalytic activity">
    <reaction evidence="1">
        <text>dUTP + H2O = dUMP + diphosphate + H(+)</text>
        <dbReference type="Rhea" id="RHEA:10248"/>
        <dbReference type="ChEBI" id="CHEBI:15377"/>
        <dbReference type="ChEBI" id="CHEBI:15378"/>
        <dbReference type="ChEBI" id="CHEBI:33019"/>
        <dbReference type="ChEBI" id="CHEBI:61555"/>
        <dbReference type="ChEBI" id="CHEBI:246422"/>
        <dbReference type="EC" id="3.6.1.23"/>
    </reaction>
</comment>
<comment type="cofactor">
    <cofactor evidence="1">
        <name>Mg(2+)</name>
        <dbReference type="ChEBI" id="CHEBI:18420"/>
    </cofactor>
</comment>
<comment type="pathway">
    <text evidence="1">Pyrimidine metabolism; dUMP biosynthesis; dUMP from dCTP (dUTP route): step 2/2.</text>
</comment>
<comment type="similarity">
    <text evidence="1">Belongs to the dUTPase family.</text>
</comment>
<feature type="chain" id="PRO_1000015451" description="Deoxyuridine 5'-triphosphate nucleotidohydrolase">
    <location>
        <begin position="1"/>
        <end position="148"/>
    </location>
</feature>
<feature type="binding site" evidence="1">
    <location>
        <begin position="67"/>
        <end position="69"/>
    </location>
    <ligand>
        <name>substrate</name>
    </ligand>
</feature>
<feature type="binding site" evidence="1">
    <location>
        <position position="80"/>
    </location>
    <ligand>
        <name>substrate</name>
    </ligand>
</feature>
<feature type="binding site" evidence="1">
    <location>
        <begin position="84"/>
        <end position="86"/>
    </location>
    <ligand>
        <name>substrate</name>
    </ligand>
</feature>
<feature type="binding site" evidence="1">
    <location>
        <position position="94"/>
    </location>
    <ligand>
        <name>substrate</name>
    </ligand>
</feature>
<accession>Q0BCK5</accession>
<reference key="1">
    <citation type="submission" date="2006-08" db="EMBL/GenBank/DDBJ databases">
        <title>Complete sequence of chromosome 1 of Burkholderia cepacia AMMD.</title>
        <authorList>
            <person name="Copeland A."/>
            <person name="Lucas S."/>
            <person name="Lapidus A."/>
            <person name="Barry K."/>
            <person name="Detter J.C."/>
            <person name="Glavina del Rio T."/>
            <person name="Hammon N."/>
            <person name="Israni S."/>
            <person name="Pitluck S."/>
            <person name="Bruce D."/>
            <person name="Chain P."/>
            <person name="Malfatti S."/>
            <person name="Shin M."/>
            <person name="Vergez L."/>
            <person name="Schmutz J."/>
            <person name="Larimer F."/>
            <person name="Land M."/>
            <person name="Hauser L."/>
            <person name="Kyrpides N."/>
            <person name="Kim E."/>
            <person name="Parke J."/>
            <person name="Coenye T."/>
            <person name="Konstantinidis K."/>
            <person name="Ramette A."/>
            <person name="Tiedje J."/>
            <person name="Richardson P."/>
        </authorList>
    </citation>
    <scope>NUCLEOTIDE SEQUENCE [LARGE SCALE GENOMIC DNA]</scope>
    <source>
        <strain>ATCC BAA-244 / DSM 16087 / CCUG 44356 / LMG 19182 / AMMD</strain>
    </source>
</reference>
<keyword id="KW-0378">Hydrolase</keyword>
<keyword id="KW-0460">Magnesium</keyword>
<keyword id="KW-0479">Metal-binding</keyword>
<keyword id="KW-0546">Nucleotide metabolism</keyword>